<evidence type="ECO:0000250" key="1"/>
<evidence type="ECO:0000250" key="2">
    <source>
        <dbReference type="UniProtKB" id="E2RP94"/>
    </source>
</evidence>
<evidence type="ECO:0000250" key="3">
    <source>
        <dbReference type="UniProtKB" id="M0R4F8"/>
    </source>
</evidence>
<evidence type="ECO:0000250" key="4">
    <source>
        <dbReference type="UniProtKB" id="Q6TXD4"/>
    </source>
</evidence>
<evidence type="ECO:0000255" key="5"/>
<evidence type="ECO:0000255" key="6">
    <source>
        <dbReference type="PROSITE-ProRule" id="PRU00062"/>
    </source>
</evidence>
<evidence type="ECO:0000255" key="7">
    <source>
        <dbReference type="PROSITE-ProRule" id="PRU00192"/>
    </source>
</evidence>
<evidence type="ECO:0000255" key="8">
    <source>
        <dbReference type="PROSITE-ProRule" id="PRU00361"/>
    </source>
</evidence>
<evidence type="ECO:0000256" key="9">
    <source>
        <dbReference type="SAM" id="MobiDB-lite"/>
    </source>
</evidence>
<evidence type="ECO:0000269" key="10">
    <source>
    </source>
</evidence>
<evidence type="ECO:0000269" key="11">
    <source>
    </source>
</evidence>
<evidence type="ECO:0000269" key="12">
    <source>
    </source>
</evidence>
<evidence type="ECO:0000269" key="13">
    <source>
    </source>
</evidence>
<evidence type="ECO:0000269" key="14">
    <source>
    </source>
</evidence>
<evidence type="ECO:0000269" key="15">
    <source>
    </source>
</evidence>
<evidence type="ECO:0000269" key="16">
    <source>
    </source>
</evidence>
<evidence type="ECO:0000269" key="17">
    <source>
    </source>
</evidence>
<evidence type="ECO:0000303" key="18">
    <source>
    </source>
</evidence>
<evidence type="ECO:0000303" key="19">
    <source>
    </source>
</evidence>
<evidence type="ECO:0000303" key="20">
    <source>
    </source>
</evidence>
<evidence type="ECO:0000305" key="21"/>
<evidence type="ECO:0000305" key="22">
    <source>
    </source>
</evidence>
<evidence type="ECO:0000312" key="23">
    <source>
        <dbReference type="HGNC" id="HGNC:30373"/>
    </source>
</evidence>
<evidence type="ECO:0007744" key="24">
    <source>
        <dbReference type="PDB" id="1UHC"/>
    </source>
</evidence>
<evidence type="ECO:0007744" key="25">
    <source>
        <dbReference type="PDB" id="4CC2"/>
    </source>
</evidence>
<evidence type="ECO:0007744" key="26">
    <source>
        <dbReference type="PDB" id="4CC3"/>
    </source>
</evidence>
<evidence type="ECO:0007744" key="27">
    <source>
        <dbReference type="PDB" id="4CC4"/>
    </source>
</evidence>
<evidence type="ECO:0007744" key="28">
    <source>
        <dbReference type="PDB" id="4CC7"/>
    </source>
</evidence>
<evidence type="ECO:0007744" key="29">
    <source>
        <dbReference type="PDB" id="4GLM"/>
    </source>
</evidence>
<evidence type="ECO:0007744" key="30">
    <source>
    </source>
</evidence>
<evidence type="ECO:0007744" key="31">
    <source>
    </source>
</evidence>
<evidence type="ECO:0007829" key="32">
    <source>
        <dbReference type="PDB" id="1UG1"/>
    </source>
</evidence>
<evidence type="ECO:0007829" key="33">
    <source>
        <dbReference type="PDB" id="1UHC"/>
    </source>
</evidence>
<evidence type="ECO:0007829" key="34">
    <source>
        <dbReference type="PDB" id="4CC2"/>
    </source>
</evidence>
<evidence type="ECO:0007829" key="35">
    <source>
        <dbReference type="PDB" id="4GLM"/>
    </source>
</evidence>
<protein>
    <recommendedName>
        <fullName evidence="23">Dynamin-binding protein</fullName>
    </recommendedName>
    <alternativeName>
        <fullName evidence="22">Scaffold protein Tuba</fullName>
    </alternativeName>
</protein>
<comment type="function">
    <text evidence="2 4 12 13 15">Plays a critical role as a guanine nucleotide exchange factor (GEF) for CDC42 in several intracellular processes associated with the actin and microtubule cytoskeleton. Regulates the structure of apical junctions through F-actin organization in epithelial cells (PubMed:17015620, PubMed:19767742). Participates in the normal lumenogenesis of epithelial cell cysts by regulating spindle orientation (PubMed:20479467). Plays a role in ciliogenesis (By similarity). May play a role in membrane trafficking between the cell surface and the Golgi (By similarity).</text>
</comment>
<comment type="subunit">
    <text evidence="1 4 12 13 14 16">Binds DNM1 via its N-terminal SH3 domains. The C-terminal SH3 domain binds a complex containing actin, tubulin, Hsp70 and actin-regulatory proteins, such as ENAH, EVL, WIRE, CR16, WAVE1 and NAP1L1 (By similarity). Interacts with FASLG (PubMed:19807924). Interacts (via SH3 domain 6) with WASL (PubMed:17015620, PubMed:19767742, PubMed:24332715). Interacts (via SH3 domain 6) interacts with ENAH (PubMed:24332715). Interacts (via C-terminal domain) with TJP1; required for the apical cell-cell junction localization of DNMBP (PubMed:17015620).</text>
</comment>
<comment type="subunit">
    <text evidence="13 16">(Microbial infection) Interacts (via SH3 domain 6) with L.monocytogenes InlC.</text>
</comment>
<comment type="interaction">
    <interactant intactId="EBI-2483419">
        <id>Q6XZF7</id>
    </interactant>
    <interactant intactId="EBI-2653038">
        <id>Q9NQY0</id>
        <label>BIN3</label>
    </interactant>
    <organismsDiffer>false</organismsDiffer>
    <experiments>5</experiments>
</comment>
<comment type="interaction">
    <interactant intactId="EBI-2483419">
        <id>Q6XZF7</id>
    </interactant>
    <interactant intactId="EBI-80070">
        <id>P21575</id>
        <label>Dnm1</label>
    </interactant>
    <organismsDiffer>true</organismsDiffer>
    <experiments>3</experiments>
</comment>
<comment type="interaction">
    <interactant intactId="EBI-16085546">
        <id>Q6XZF7-1</id>
    </interactant>
    <interactant intactId="EBI-957615">
        <id>O00401</id>
        <label>WASL</label>
    </interactant>
    <organismsDiffer>false</organismsDiffer>
    <experiments>2</experiments>
</comment>
<comment type="interaction">
    <interactant intactId="EBI-16085546">
        <id>Q6XZF7-1</id>
    </interactant>
    <interactant intactId="EBI-16085647">
        <id>Q03173-1</id>
        <label>Enah</label>
    </interactant>
    <organismsDiffer>true</organismsDiffer>
    <experiments>2</experiments>
</comment>
<comment type="interaction">
    <interactant intactId="EBI-16085546">
        <id>Q6XZF7-1</id>
    </interactant>
    <interactant intactId="EBI-21019720">
        <id>P71451</id>
        <label>inlC</label>
    </interactant>
    <organismsDiffer>true</organismsDiffer>
    <experiments>6</experiments>
</comment>
<comment type="subcellular location">
    <subcellularLocation>
        <location evidence="12">Cytoplasm</location>
    </subcellularLocation>
    <subcellularLocation>
        <location evidence="4">Golgi apparatus</location>
        <location evidence="4">Golgi stack</location>
    </subcellularLocation>
    <subcellularLocation>
        <location evidence="4">Cytoplasm</location>
        <location evidence="4">Cytoskeleton</location>
    </subcellularLocation>
    <subcellularLocation>
        <location evidence="3">Synapse</location>
    </subcellularLocation>
    <subcellularLocation>
        <location evidence="12">Cell junction</location>
    </subcellularLocation>
    <text evidence="12">Localizes to the apical junction, colocalizes with TJP1.</text>
</comment>
<comment type="alternative products">
    <event type="alternative splicing"/>
    <isoform>
        <id>Q6XZF7-1</id>
        <name>1</name>
        <sequence type="displayed"/>
    </isoform>
    <isoform>
        <id>Q6XZF7-2</id>
        <name>2</name>
        <sequence type="described" ref="VSP_012079"/>
    </isoform>
</comment>
<comment type="tissue specificity">
    <text evidence="10">Detected in heart, brain, lung, liver, skeletal muscle, kidney and pancreas.</text>
</comment>
<comment type="disease" evidence="17">
    <disease id="DI-05553">
        <name>Cataract 48</name>
        <acronym>CTRCT48</acronym>
        <description>A form of cataract, an opacification of the crystalline lens of the eye that frequently results in visual impairment or blindness. Opacities vary in morphology, are often confined to a portion of the lens, and may be static or progressive. In general, the more posteriorly located and dense an opacity, the greater the impact on visual function. CTRCT48 is an autosomal recessive form characterized by infantile or early-childhood onset.</description>
        <dbReference type="MIM" id="618415"/>
    </disease>
    <text>The disease is caused by variants affecting the gene represented in this entry.</text>
</comment>
<accession>Q6XZF7</accession>
<accession>Q8IVY3</accession>
<accession>Q9Y2L3</accession>
<feature type="chain" id="PRO_0000079959" description="Dynamin-binding protein">
    <location>
        <begin position="1"/>
        <end position="1577"/>
    </location>
</feature>
<feature type="domain" description="SH3 1" evidence="7">
    <location>
        <begin position="2"/>
        <end position="61"/>
    </location>
</feature>
<feature type="domain" description="SH3 2" evidence="7">
    <location>
        <begin position="66"/>
        <end position="126"/>
    </location>
</feature>
<feature type="domain" description="SH3 3" evidence="7">
    <location>
        <begin position="145"/>
        <end position="204"/>
    </location>
</feature>
<feature type="domain" description="SH3 4" evidence="7">
    <location>
        <begin position="243"/>
        <end position="302"/>
    </location>
</feature>
<feature type="domain" description="DH" evidence="6">
    <location>
        <begin position="784"/>
        <end position="967"/>
    </location>
</feature>
<feature type="domain" description="BAR" evidence="8">
    <location>
        <begin position="1008"/>
        <end position="1217"/>
    </location>
</feature>
<feature type="domain" description="SH3 5" evidence="7">
    <location>
        <begin position="1285"/>
        <end position="1348"/>
    </location>
</feature>
<feature type="domain" description="SH3 6" evidence="7">
    <location>
        <begin position="1513"/>
        <end position="1576"/>
    </location>
</feature>
<feature type="region of interest" description="Disordered" evidence="9">
    <location>
        <begin position="211"/>
        <end position="244"/>
    </location>
</feature>
<feature type="region of interest" description="Disordered" evidence="9">
    <location>
        <begin position="335"/>
        <end position="395"/>
    </location>
</feature>
<feature type="region of interest" description="Disordered" evidence="9">
    <location>
        <begin position="591"/>
        <end position="624"/>
    </location>
</feature>
<feature type="region of interest" description="Disordered" evidence="9">
    <location>
        <begin position="639"/>
        <end position="659"/>
    </location>
</feature>
<feature type="region of interest" description="Disordered" evidence="9">
    <location>
        <begin position="1348"/>
        <end position="1487"/>
    </location>
</feature>
<feature type="coiled-coil region" evidence="5">
    <location>
        <begin position="693"/>
        <end position="757"/>
    </location>
</feature>
<feature type="coiled-coil region" evidence="5">
    <location>
        <begin position="1136"/>
        <end position="1173"/>
    </location>
</feature>
<feature type="compositionally biased region" description="Acidic residues" evidence="9">
    <location>
        <begin position="230"/>
        <end position="244"/>
    </location>
</feature>
<feature type="compositionally biased region" description="Basic and acidic residues" evidence="9">
    <location>
        <begin position="335"/>
        <end position="344"/>
    </location>
</feature>
<feature type="compositionally biased region" description="Pro residues" evidence="9">
    <location>
        <begin position="639"/>
        <end position="649"/>
    </location>
</feature>
<feature type="compositionally biased region" description="Polar residues" evidence="9">
    <location>
        <begin position="1376"/>
        <end position="1405"/>
    </location>
</feature>
<feature type="compositionally biased region" description="Low complexity" evidence="9">
    <location>
        <begin position="1419"/>
        <end position="1442"/>
    </location>
</feature>
<feature type="modified residue" description="N-acetylmethionine" evidence="30">
    <location>
        <position position="1"/>
    </location>
</feature>
<feature type="modified residue" description="Phosphoserine" evidence="31">
    <location>
        <position position="496"/>
    </location>
</feature>
<feature type="modified residue" description="Phosphoserine" evidence="31">
    <location>
        <position position="684"/>
    </location>
</feature>
<feature type="splice variant" id="VSP_012079" description="In isoform 2." evidence="20">
    <location>
        <begin position="1"/>
        <end position="754"/>
    </location>
</feature>
<feature type="sequence variant" id="VAR_050955" description="In dbSNP:rs12267912.">
    <original>E</original>
    <variation>D</variation>
    <location>
        <position position="81"/>
    </location>
</feature>
<feature type="sequence variant" id="VAR_081450" description="In CTRCT48." evidence="17">
    <location>
        <begin position="271"/>
        <end position="1577"/>
    </location>
</feature>
<feature type="sequence variant" id="VAR_050956" description="In dbSNP:rs35924554.">
    <original>N</original>
    <variation>K</variation>
    <location>
        <position position="373"/>
    </location>
</feature>
<feature type="sequence variant" id="VAR_050957" description="In dbSNP:rs7919507.">
    <original>N</original>
    <variation>K</variation>
    <location>
        <position position="914"/>
    </location>
</feature>
<feature type="sequence variant" id="VAR_024339" description="In dbSNP:rs11190305." evidence="11">
    <original>C</original>
    <variation>W</variation>
    <location>
        <position position="1413"/>
    </location>
</feature>
<feature type="mutagenesis site" description="Decreased interaction of SH3 domain 6 with L.monocytogenes InlC." evidence="16">
    <original>V</original>
    <variation>R</variation>
    <location>
        <position position="1521"/>
    </location>
</feature>
<feature type="mutagenesis site" description="Wild-type interaction of SH3 domain 6 with L.monocytogenes InlC." evidence="16">
    <original>P</original>
    <variation>A</variation>
    <location>
        <position position="1529"/>
    </location>
</feature>
<feature type="mutagenesis site" description="Decreased interaction of SH3 domain 6 with L.monocytogenes InlC." evidence="16">
    <original>N</original>
    <variation>R</variation>
    <location>
        <position position="1569"/>
    </location>
</feature>
<feature type="sequence conflict" description="In Ref. 3; AAH41628." evidence="21" ref="3">
    <original>M</original>
    <variation>T</variation>
    <location>
        <position position="831"/>
    </location>
</feature>
<feature type="strand" evidence="35">
    <location>
        <begin position="247"/>
        <end position="252"/>
    </location>
</feature>
<feature type="strand" evidence="35">
    <location>
        <begin position="269"/>
        <end position="275"/>
    </location>
</feature>
<feature type="strand" evidence="35">
    <location>
        <begin position="280"/>
        <end position="285"/>
    </location>
</feature>
<feature type="strand" evidence="35">
    <location>
        <begin position="288"/>
        <end position="293"/>
    </location>
</feature>
<feature type="helix" evidence="35">
    <location>
        <begin position="294"/>
        <end position="296"/>
    </location>
</feature>
<feature type="strand" evidence="35">
    <location>
        <begin position="297"/>
        <end position="300"/>
    </location>
</feature>
<feature type="helix" evidence="32">
    <location>
        <begin position="1278"/>
        <end position="1283"/>
    </location>
</feature>
<feature type="helix" evidence="32">
    <location>
        <begin position="1286"/>
        <end position="1288"/>
    </location>
</feature>
<feature type="strand" evidence="32">
    <location>
        <begin position="1289"/>
        <end position="1294"/>
    </location>
</feature>
<feature type="strand" evidence="32">
    <location>
        <begin position="1300"/>
        <end position="1302"/>
    </location>
</feature>
<feature type="strand" evidence="32">
    <location>
        <begin position="1311"/>
        <end position="1317"/>
    </location>
</feature>
<feature type="strand" evidence="32">
    <location>
        <begin position="1324"/>
        <end position="1330"/>
    </location>
</feature>
<feature type="strand" evidence="32">
    <location>
        <begin position="1332"/>
        <end position="1339"/>
    </location>
</feature>
<feature type="helix" evidence="32">
    <location>
        <begin position="1340"/>
        <end position="1342"/>
    </location>
</feature>
<feature type="strand" evidence="32">
    <location>
        <begin position="1343"/>
        <end position="1345"/>
    </location>
</feature>
<feature type="strand" evidence="34">
    <location>
        <begin position="1517"/>
        <end position="1522"/>
    </location>
</feature>
<feature type="strand" evidence="33">
    <location>
        <begin position="1528"/>
        <end position="1531"/>
    </location>
</feature>
<feature type="strand" evidence="34">
    <location>
        <begin position="1539"/>
        <end position="1546"/>
    </location>
</feature>
<feature type="strand" evidence="34">
    <location>
        <begin position="1554"/>
        <end position="1559"/>
    </location>
</feature>
<feature type="strand" evidence="34">
    <location>
        <begin position="1562"/>
        <end position="1567"/>
    </location>
</feature>
<feature type="helix" evidence="34">
    <location>
        <begin position="1568"/>
        <end position="1570"/>
    </location>
</feature>
<feature type="strand" evidence="34">
    <location>
        <begin position="1571"/>
        <end position="1574"/>
    </location>
</feature>
<reference key="1">
    <citation type="journal article" date="2003" name="J. Biol. Chem.">
        <title>Tuba, a novel protein containing bin/amphiphysin/Rvs and Dbl homology domains, links dynamin to regulation of the actin cytoskeleton.</title>
        <authorList>
            <person name="Salazar M.A."/>
            <person name="Kwiatkowski A.V."/>
            <person name="Pellegrini L."/>
            <person name="Cestra G."/>
            <person name="Butler M.H."/>
            <person name="Rossman K.L."/>
            <person name="Serna D.M."/>
            <person name="Sondek J."/>
            <person name="Gertler F.B."/>
            <person name="De Camilli P."/>
        </authorList>
    </citation>
    <scope>NUCLEOTIDE SEQUENCE [MRNA] (ISOFORM 1)</scope>
    <scope>ALTERNATIVE SPLICING</scope>
    <scope>TISSUE SPECIFICITY</scope>
    <source>
        <tissue>Brain</tissue>
        <tissue>Skeletal muscle</tissue>
    </source>
</reference>
<reference key="2">
    <citation type="journal article" date="1999" name="DNA Res.">
        <title>Prediction of the coding sequences of unidentified human genes. XIII. The complete sequences of 100 new cDNA clones from brain which code for large proteins in vitro.</title>
        <authorList>
            <person name="Nagase T."/>
            <person name="Ishikawa K."/>
            <person name="Suyama M."/>
            <person name="Kikuno R."/>
            <person name="Hirosawa M."/>
            <person name="Miyajima N."/>
            <person name="Tanaka A."/>
            <person name="Kotani H."/>
            <person name="Nomura N."/>
            <person name="Ohara O."/>
        </authorList>
    </citation>
    <scope>NUCLEOTIDE SEQUENCE [LARGE SCALE MRNA] OF 263-1577 (ISOFORM 1)</scope>
    <source>
        <tissue>Brain</tissue>
    </source>
</reference>
<reference key="3">
    <citation type="journal article" date="2004" name="Genome Res.">
        <title>The status, quality, and expansion of the NIH full-length cDNA project: the Mammalian Gene Collection (MGC).</title>
        <authorList>
            <consortium name="The MGC Project Team"/>
        </authorList>
    </citation>
    <scope>NUCLEOTIDE SEQUENCE [LARGE SCALE MRNA] (ISOFORM 2)</scope>
    <scope>VARIANT TRP-1413</scope>
    <source>
        <tissue>Uterus</tissue>
    </source>
</reference>
<reference key="4">
    <citation type="journal article" date="2006" name="J. Cell Biol.">
        <title>Cdc42 GEF Tuba regulates the junctional configuration of simple epithelial cells.</title>
        <authorList>
            <person name="Otani T."/>
            <person name="Ichii T."/>
            <person name="Aono S."/>
            <person name="Takeichi M."/>
        </authorList>
    </citation>
    <scope>INTERACTION WITH TJP1 AND WASL</scope>
    <scope>SUBCELLULAR LOCATION</scope>
    <scope>FUNCTION</scope>
</reference>
<reference key="5">
    <citation type="journal article" date="2008" name="Proc. Natl. Acad. Sci. U.S.A.">
        <title>A quantitative atlas of mitotic phosphorylation.</title>
        <authorList>
            <person name="Dephoure N."/>
            <person name="Zhou C."/>
            <person name="Villen J."/>
            <person name="Beausoleil S.A."/>
            <person name="Bakalarski C.E."/>
            <person name="Elledge S.J."/>
            <person name="Gygi S.P."/>
        </authorList>
    </citation>
    <scope>IDENTIFICATION BY MASS SPECTROMETRY [LARGE SCALE ANALYSIS]</scope>
    <source>
        <tissue>Cervix carcinoma</tissue>
    </source>
</reference>
<reference key="6">
    <citation type="journal article" date="2009" name="BMC Immunol.">
        <title>Identification of SH3 domain interaction partners of human FasL (CD178) by phage display screening.</title>
        <authorList>
            <person name="Voss M."/>
            <person name="Lettau M."/>
            <person name="Janssen O."/>
        </authorList>
    </citation>
    <scope>INTERACTION WITH FASLG</scope>
</reference>
<reference key="7">
    <citation type="journal article" date="2009" name="Nat. Cell Biol.">
        <title>The bacterial virulence factor InlC perturbs apical cell junctions and promotes cell-to-cell spread of Listeria.</title>
        <authorList>
            <person name="Rajabian T."/>
            <person name="Gavicherla B."/>
            <person name="Heisig M."/>
            <person name="Mueller-Altrock S."/>
            <person name="Goebel W."/>
            <person name="Gray-Owen S.D."/>
            <person name="Ireton K."/>
        </authorList>
    </citation>
    <scope>FUNCTION</scope>
    <scope>INTERACTION WITH WASL</scope>
    <scope>INTERACTION WITH L.MONOCYTOGENES INLC</scope>
    <scope>SUBUNIT (MICROBIAL INFECTION)</scope>
</reference>
<reference key="8">
    <citation type="journal article" date="2010" name="J. Cell Biol.">
        <title>Tuba, a Cdc42 GEF, is required for polarized spindle orientation during epithelial cyst formation.</title>
        <authorList>
            <person name="Qin Y."/>
            <person name="Meisen W.H."/>
            <person name="Hao Y."/>
            <person name="Macara I.G."/>
        </authorList>
    </citation>
    <scope>FUNCTION</scope>
</reference>
<reference key="9">
    <citation type="journal article" date="2010" name="Sci. Signal.">
        <title>Quantitative phosphoproteomics reveals widespread full phosphorylation site occupancy during mitosis.</title>
        <authorList>
            <person name="Olsen J.V."/>
            <person name="Vermeulen M."/>
            <person name="Santamaria A."/>
            <person name="Kumar C."/>
            <person name="Miller M.L."/>
            <person name="Jensen L.J."/>
            <person name="Gnad F."/>
            <person name="Cox J."/>
            <person name="Jensen T.S."/>
            <person name="Nigg E.A."/>
            <person name="Brunak S."/>
            <person name="Mann M."/>
        </authorList>
    </citation>
    <scope>IDENTIFICATION BY MASS SPECTROMETRY [LARGE SCALE ANALYSIS]</scope>
    <source>
        <tissue>Cervix carcinoma</tissue>
    </source>
</reference>
<reference key="10">
    <citation type="journal article" date="2011" name="BMC Syst. Biol.">
        <title>Initial characterization of the human central proteome.</title>
        <authorList>
            <person name="Burkard T.R."/>
            <person name="Planyavsky M."/>
            <person name="Kaupe I."/>
            <person name="Breitwieser F.P."/>
            <person name="Buerckstuemmer T."/>
            <person name="Bennett K.L."/>
            <person name="Superti-Furga G."/>
            <person name="Colinge J."/>
        </authorList>
    </citation>
    <scope>IDENTIFICATION BY MASS SPECTROMETRY [LARGE SCALE ANALYSIS]</scope>
</reference>
<reference key="11">
    <citation type="journal article" date="2012" name="Proc. Natl. Acad. Sci. U.S.A.">
        <title>N-terminal acetylome analyses and functional insights of the N-terminal acetyltransferase NatB.</title>
        <authorList>
            <person name="Van Damme P."/>
            <person name="Lasa M."/>
            <person name="Polevoda B."/>
            <person name="Gazquez C."/>
            <person name="Elosegui-Artola A."/>
            <person name="Kim D.S."/>
            <person name="De Juan-Pardo E."/>
            <person name="Demeyer K."/>
            <person name="Hole K."/>
            <person name="Larrea E."/>
            <person name="Timmerman E."/>
            <person name="Prieto J."/>
            <person name="Arnesen T."/>
            <person name="Sherman F."/>
            <person name="Gevaert K."/>
            <person name="Aldabe R."/>
        </authorList>
    </citation>
    <scope>ACETYLATION [LARGE SCALE ANALYSIS] AT MET-1</scope>
    <scope>IDENTIFICATION BY MASS SPECTROMETRY [LARGE SCALE ANALYSIS]</scope>
</reference>
<reference key="12">
    <citation type="journal article" date="2013" name="J. Proteome Res.">
        <title>Toward a comprehensive characterization of a human cancer cell phosphoproteome.</title>
        <authorList>
            <person name="Zhou H."/>
            <person name="Di Palma S."/>
            <person name="Preisinger C."/>
            <person name="Peng M."/>
            <person name="Polat A.N."/>
            <person name="Heck A.J."/>
            <person name="Mohammed S."/>
        </authorList>
    </citation>
    <scope>PHOSPHORYLATION [LARGE SCALE ANALYSIS] AT SER-496 AND SER-684</scope>
    <scope>IDENTIFICATION BY MASS SPECTROMETRY [LARGE SCALE ANALYSIS]</scope>
    <source>
        <tissue>Cervix carcinoma</tissue>
        <tissue>Erythroleukemia</tissue>
    </source>
</reference>
<reference key="13">
    <citation type="journal article" date="2014" name="J. Proteomics">
        <title>An enzyme assisted RP-RPLC approach for in-depth analysis of human liver phosphoproteome.</title>
        <authorList>
            <person name="Bian Y."/>
            <person name="Song C."/>
            <person name="Cheng K."/>
            <person name="Dong M."/>
            <person name="Wang F."/>
            <person name="Huang J."/>
            <person name="Sun D."/>
            <person name="Wang L."/>
            <person name="Ye M."/>
            <person name="Zou H."/>
        </authorList>
    </citation>
    <scope>IDENTIFICATION BY MASS SPECTROMETRY [LARGE SCALE ANALYSIS]</scope>
    <source>
        <tissue>Liver</tissue>
    </source>
</reference>
<reference key="14">
    <citation type="journal article" date="2018" name="Am. J. Hum. Genet.">
        <title>Bi-allelic loss-of-function variants in DNMBP cause infantile cataracts.</title>
        <authorList>
            <person name="Ansar M."/>
            <person name="Chung H.L."/>
            <person name="Taylor R.L."/>
            <person name="Nazir A."/>
            <person name="Imtiaz S."/>
            <person name="Sarwar M.T."/>
            <person name="Manousopoulou A."/>
            <person name="Makrythanasis P."/>
            <person name="Saeed S."/>
            <person name="Falconnet E."/>
            <person name="Guipponi M."/>
            <person name="Pournaras C.J."/>
            <person name="Ansari M.A."/>
            <person name="Ranza E."/>
            <person name="Santoni F.A."/>
            <person name="Ahmed J."/>
            <person name="Shah I."/>
            <person name="Gul K."/>
            <person name="Black G.C."/>
            <person name="Bellen H.J."/>
            <person name="Antonarakis S.E."/>
        </authorList>
    </citation>
    <scope>VARIANT CTRCT48 271-ARG--THR-1577 DEL</scope>
    <scope>INVOLVEMENT IN CTRCT48</scope>
</reference>
<reference key="15">
    <citation type="submission" date="2003-12" db="PDB data bank">
        <title>NMR structure of SH3 domain of hypothetical protein BAA76854.1.</title>
        <authorList>
            <consortium name="RIKEN structural genomics initiative (RSGI)"/>
        </authorList>
    </citation>
    <scope>STRUCTURE BY NMR OF 1278-1353 AND 1510-1575</scope>
</reference>
<reference evidence="24" key="16">
    <citation type="submission" date="2003-06" db="PDB data bank">
        <title>Solution structure of RSGI RUH-002, a SH3 domain of KIAA1010 protein [Homo sapiens].</title>
        <authorList>
            <person name="Abe T."/>
            <person name="Hirota H."/>
            <person name="Kobayashi N."/>
            <person name="Hayashi F."/>
            <person name="Yokoyama S."/>
        </authorList>
    </citation>
    <scope>STRUCTURE BY NMR OF 1510-1575</scope>
</reference>
<reference evidence="29" key="17">
    <citation type="submission" date="2012-08" db="PDB data bank">
        <title>Crystal structure of the SH3 Domain of DNMBP protein [Homo sapiens].</title>
        <authorList>
            <person name="Guan X."/>
            <person name="Dong A."/>
            <person name="Huang H."/>
            <person name="Tempel W."/>
            <person name="Gu J."/>
            <person name="Sidhu S."/>
            <person name="Bountra C."/>
            <person name="Arrowsmith C.H."/>
            <person name="Edwards A.M."/>
            <person name="Tong Y."/>
        </authorList>
    </citation>
    <scope>X-RAY CRYSTALLOGRAPHY (1.90 ANGSTROMS) OF 246-301</scope>
</reference>
<reference evidence="25 26 27 28" key="18">
    <citation type="journal article" date="2014" name="Structure">
        <title>Structural details of human tuba recruitment by InlC of Listeria monocytogenes elucidate bacterial cell-cell spreading.</title>
        <authorList>
            <person name="Polle L."/>
            <person name="Rigano L.A."/>
            <person name="Julian R."/>
            <person name="Ireton K."/>
            <person name="Schubert W.D."/>
        </authorList>
    </citation>
    <scope>X-RAY CRYSTALLOGRAPHY (1.55 ANGSTROMS) OF 1513-1577 IN COMPLEX WITH WASL; MURINE ENAH AND L.MONOCYTOGENES INLC</scope>
    <scope>SUBUNIT</scope>
    <scope>MUTAGENESIS OF VAL-1521; PRO-1529 AND ASN-1569</scope>
</reference>
<keyword id="KW-0002">3D-structure</keyword>
<keyword id="KW-0007">Acetylation</keyword>
<keyword id="KW-0025">Alternative splicing</keyword>
<keyword id="KW-0898">Cataract</keyword>
<keyword id="KW-0965">Cell junction</keyword>
<keyword id="KW-0175">Coiled coil</keyword>
<keyword id="KW-0963">Cytoplasm</keyword>
<keyword id="KW-0206">Cytoskeleton</keyword>
<keyword id="KW-0225">Disease variant</keyword>
<keyword id="KW-0333">Golgi apparatus</keyword>
<keyword id="KW-0344">Guanine-nucleotide releasing factor</keyword>
<keyword id="KW-0597">Phosphoprotein</keyword>
<keyword id="KW-1267">Proteomics identification</keyword>
<keyword id="KW-1185">Reference proteome</keyword>
<keyword id="KW-0677">Repeat</keyword>
<keyword id="KW-0728">SH3 domain</keyword>
<keyword id="KW-0770">Synapse</keyword>
<name>DNMBP_HUMAN</name>
<sequence>MEAGSVVRAIFDFCPSVSEELPLFVGDIIEVLAVVDEFWLLGKKEDVTGQFPSSFVEIVTIPSLKEGERLFVCICEFTSQELDNLPLHRGDLVILDGIPTAGWLQGRSCWGARGFFPSSCVRELCLSSQSRQWHSQSALFQIPEYSMGQARALMGLSAQLDEELDFREGDVITIIGVPEPGWFEGELEGRRGIFPEGFVELLGPLRTVDESVSSGNQDDCIVNGEVDTPVGEEEIGPDEDEEEPGTYGVALYRFQALEPNELDFEVGDKIRILATLEDGWLEGSLKGRTGIFPYRFVKLCPDTRVEETMALPQEGSLARIPETSLDCLENTLGVEEQRHETSDHEAEEPDCIISEAPTSPLGHLTSEYDTDRNSYQDEDTAGGPPRSPGVEWEMPLATDSPTSDPTEVVNGISSQPQVPFHPNLQKSQYYSTVGGSHPHSEQYPDLLPLEARTRDYASLPPKRMYSQLKTLQKPVLPLYRGSSVSASRVVKPRQSSPQLHNLASYTKKHHTSSVYSISERLEMKPGPQAQGLVMEAATHSQGDGSTDLDSKLTQQLIEFEKSLAGPGTEPDKILRHFSIMDFNSEKDIVRGSSKLITEQELPERRKALRPPPPRPCTPVSTSPHLLVDQNLKPAPPLVVRPSRPAPLPPSAQQRTNAVSPKLLSRHRPTCETLEKEGPGHMGRSLDQTSPCPLVLVRIEEMERDLDMYSRAQEELNLMLEEKQDESSRAETLEDLKFCESNIESLNMELQQLREMTLLSSQSSSLVAPSGSVSAENPEQRMLEKRAKVIEELLQTERDYIRDLEMCIERIMVPMQQAQVPNIDFEGLFGNMQMVIKVSKQLLAALEISDAVGPVFLGHRDELEGTYKIYCQNHDEAIALLEIYEKDEKIQKHLQDSLADLKSLYNEWGCTNYINLGSFLIKPVQRVMRYPLLLMELLNSTPESHPDKVPLTNAVLAVKEINVNINEYKRRKDLVLKYRKGDEDSLMEKISKLNIHSIIKKSNRVSSHLKHLTGFAPQIKDEVFEETEKNFRMQERLIKSFIRDLSLYLQHIRESACVKVVAAVSMWDVCMERGHRDLEQFERVHRYISDQLFTNFKERTERLVISPLNQLLSMFTGPHKLVQKRFDKLLDFYNCTERAEKLKDKKTLEELQSARNNYEALNAQLLDELPKFHQYAQGLFTNCVHGYAEAHCDFVHQALEQLKPLLSLLKVAGREGNLIAIFHEEHSRVLQQLQVFTFFPESLPATKKPFERKTIDRQSARKPLLGLPSYMLQSEELRASLLARYPPEKLFQAERNFNAAQDLDVSLLEGDLVGVIKKKDPMGSQNRWLIDNGVTKGFVYSSFLKPYNPRRSHSDASVGSHSSTESEHGSSSPRFPRQNSGSTLTFNPSSMAVSFTSGSCQKQPQDASPPPKECDQGTLSASLNPSNSESSPSRCPSDPDSTSQPRSGDSADVARDVKQPTATPRSYRNFRHPEIVGYSVPGRNGQSQDLVKGCARTAQAPEDRSTEPDGSEAEGNQVYFAVYTFKARNPNELSVSANQKLKILEFKDVTGNTEWWLAEVNGKKGYVPSNYIRKTEYT</sequence>
<gene>
    <name evidence="23" type="primary">DNMBP</name>
    <name evidence="23" type="synonym">ARHGEF36</name>
    <name evidence="18" type="synonym">KIAA1010</name>
    <name evidence="19" type="synonym">TUBA</name>
</gene>
<organism>
    <name type="scientific">Homo sapiens</name>
    <name type="common">Human</name>
    <dbReference type="NCBI Taxonomy" id="9606"/>
    <lineage>
        <taxon>Eukaryota</taxon>
        <taxon>Metazoa</taxon>
        <taxon>Chordata</taxon>
        <taxon>Craniata</taxon>
        <taxon>Vertebrata</taxon>
        <taxon>Euteleostomi</taxon>
        <taxon>Mammalia</taxon>
        <taxon>Eutheria</taxon>
        <taxon>Euarchontoglires</taxon>
        <taxon>Primates</taxon>
        <taxon>Haplorrhini</taxon>
        <taxon>Catarrhini</taxon>
        <taxon>Hominidae</taxon>
        <taxon>Homo</taxon>
    </lineage>
</organism>
<dbReference type="EMBL" id="AY196211">
    <property type="protein sequence ID" value="AAP34307.1"/>
    <property type="molecule type" value="mRNA"/>
</dbReference>
<dbReference type="EMBL" id="AB023227">
    <property type="protein sequence ID" value="BAA76854.1"/>
    <property type="molecule type" value="mRNA"/>
</dbReference>
<dbReference type="EMBL" id="BC041628">
    <property type="protein sequence ID" value="AAH41628.1"/>
    <property type="molecule type" value="mRNA"/>
</dbReference>
<dbReference type="CCDS" id="CCDS7485.1">
    <molecule id="Q6XZF7-1"/>
</dbReference>
<dbReference type="RefSeq" id="NP_001305255.1">
    <property type="nucleotide sequence ID" value="NM_001318326.1"/>
</dbReference>
<dbReference type="RefSeq" id="NP_001305256.1">
    <property type="nucleotide sequence ID" value="NM_001318327.1"/>
</dbReference>
<dbReference type="RefSeq" id="NP_056036.1">
    <molecule id="Q6XZF7-1"/>
    <property type="nucleotide sequence ID" value="NM_015221.4"/>
</dbReference>
<dbReference type="RefSeq" id="XP_011537861.1">
    <molecule id="Q6XZF7-1"/>
    <property type="nucleotide sequence ID" value="XM_011539559.3"/>
</dbReference>
<dbReference type="RefSeq" id="XP_047280866.1">
    <molecule id="Q6XZF7-1"/>
    <property type="nucleotide sequence ID" value="XM_047424910.1"/>
</dbReference>
<dbReference type="PDB" id="1UG1">
    <property type="method" value="NMR"/>
    <property type="chains" value="A=1278-1355"/>
</dbReference>
<dbReference type="PDB" id="1UHC">
    <property type="method" value="NMR"/>
    <property type="chains" value="A=1510-1575"/>
</dbReference>
<dbReference type="PDB" id="4CC2">
    <property type="method" value="X-ray"/>
    <property type="resolution" value="1.55 A"/>
    <property type="chains" value="A/C=1513-1577"/>
</dbReference>
<dbReference type="PDB" id="4CC3">
    <property type="method" value="X-ray"/>
    <property type="resolution" value="1.97 A"/>
    <property type="chains" value="A/C/E/G=1513-1577"/>
</dbReference>
<dbReference type="PDB" id="4CC4">
    <property type="method" value="X-ray"/>
    <property type="resolution" value="2.60 A"/>
    <property type="chains" value="B/D/F=1513-1577"/>
</dbReference>
<dbReference type="PDB" id="4CC7">
    <property type="method" value="X-ray"/>
    <property type="resolution" value="1.97 A"/>
    <property type="chains" value="A/C/E/G/I/K/M=1513-1577"/>
</dbReference>
<dbReference type="PDB" id="4GLM">
    <property type="method" value="X-ray"/>
    <property type="resolution" value="1.90 A"/>
    <property type="chains" value="A/B/C/D=246-301"/>
</dbReference>
<dbReference type="PDBsum" id="1UG1"/>
<dbReference type="PDBsum" id="1UHC"/>
<dbReference type="PDBsum" id="4CC2"/>
<dbReference type="PDBsum" id="4CC3"/>
<dbReference type="PDBsum" id="4CC4"/>
<dbReference type="PDBsum" id="4CC7"/>
<dbReference type="PDBsum" id="4GLM"/>
<dbReference type="SMR" id="Q6XZF7"/>
<dbReference type="BioGRID" id="116869">
    <property type="interactions" value="129"/>
</dbReference>
<dbReference type="DIP" id="DIP-53822N"/>
<dbReference type="FunCoup" id="Q6XZF7">
    <property type="interactions" value="357"/>
</dbReference>
<dbReference type="IntAct" id="Q6XZF7">
    <property type="interactions" value="54"/>
</dbReference>
<dbReference type="MINT" id="Q6XZF7"/>
<dbReference type="STRING" id="9606.ENSP00000315659"/>
<dbReference type="ChEMBL" id="CHEMBL4295871"/>
<dbReference type="GlyGen" id="Q6XZF7">
    <property type="glycosylation" value="2 sites, 1 O-linked glycan (1 site)"/>
</dbReference>
<dbReference type="iPTMnet" id="Q6XZF7"/>
<dbReference type="MetOSite" id="Q6XZF7"/>
<dbReference type="PhosphoSitePlus" id="Q6XZF7"/>
<dbReference type="BioMuta" id="DNMBP"/>
<dbReference type="DMDM" id="56404535"/>
<dbReference type="jPOST" id="Q6XZF7"/>
<dbReference type="MassIVE" id="Q6XZF7"/>
<dbReference type="PaxDb" id="9606-ENSP00000315659"/>
<dbReference type="PeptideAtlas" id="Q6XZF7"/>
<dbReference type="ProteomicsDB" id="67829">
    <molecule id="Q6XZF7-1"/>
</dbReference>
<dbReference type="ProteomicsDB" id="67830">
    <molecule id="Q6XZF7-2"/>
</dbReference>
<dbReference type="Pumba" id="Q6XZF7"/>
<dbReference type="ABCD" id="Q6XZF7">
    <property type="antibodies" value="6 sequenced antibodies"/>
</dbReference>
<dbReference type="Antibodypedia" id="31117">
    <property type="antibodies" value="152 antibodies from 24 providers"/>
</dbReference>
<dbReference type="DNASU" id="23268"/>
<dbReference type="Ensembl" id="ENST00000324109.9">
    <molecule id="Q6XZF7-1"/>
    <property type="protein sequence ID" value="ENSP00000315659.4"/>
    <property type="gene ID" value="ENSG00000107554.17"/>
</dbReference>
<dbReference type="GeneID" id="23268"/>
<dbReference type="KEGG" id="hsa:23268"/>
<dbReference type="MANE-Select" id="ENST00000324109.9">
    <property type="protein sequence ID" value="ENSP00000315659.4"/>
    <property type="RefSeq nucleotide sequence ID" value="NM_015221.4"/>
    <property type="RefSeq protein sequence ID" value="NP_056036.1"/>
</dbReference>
<dbReference type="UCSC" id="uc001kqg.3">
    <molecule id="Q6XZF7-1"/>
    <property type="organism name" value="human"/>
</dbReference>
<dbReference type="AGR" id="HGNC:30373"/>
<dbReference type="CTD" id="23268"/>
<dbReference type="DisGeNET" id="23268"/>
<dbReference type="GeneCards" id="DNMBP"/>
<dbReference type="HGNC" id="HGNC:30373">
    <property type="gene designation" value="DNMBP"/>
</dbReference>
<dbReference type="HPA" id="ENSG00000107554">
    <property type="expression patterns" value="Low tissue specificity"/>
</dbReference>
<dbReference type="MalaCards" id="DNMBP"/>
<dbReference type="MIM" id="611282">
    <property type="type" value="gene"/>
</dbReference>
<dbReference type="MIM" id="618415">
    <property type="type" value="phenotype"/>
</dbReference>
<dbReference type="neXtProt" id="NX_Q6XZF7"/>
<dbReference type="OpenTargets" id="ENSG00000107554"/>
<dbReference type="Orphanet" id="98994">
    <property type="disease" value="Total early-onset cataract"/>
</dbReference>
<dbReference type="PharmGKB" id="PA134950706"/>
<dbReference type="VEuPathDB" id="HostDB:ENSG00000107554"/>
<dbReference type="eggNOG" id="KOG3519">
    <property type="taxonomic scope" value="Eukaryota"/>
</dbReference>
<dbReference type="eggNOG" id="KOG4225">
    <property type="taxonomic scope" value="Eukaryota"/>
</dbReference>
<dbReference type="GeneTree" id="ENSGT00950000183088"/>
<dbReference type="HOGENOM" id="CLU_252350_0_0_1"/>
<dbReference type="InParanoid" id="Q6XZF7"/>
<dbReference type="OrthoDB" id="27823at2759"/>
<dbReference type="PAN-GO" id="Q6XZF7">
    <property type="GO annotations" value="0 GO annotations based on evolutionary models"/>
</dbReference>
<dbReference type="PhylomeDB" id="Q6XZF7"/>
<dbReference type="TreeFam" id="TF330015"/>
<dbReference type="PathwayCommons" id="Q6XZF7"/>
<dbReference type="Reactome" id="R-HSA-9013148">
    <property type="pathway name" value="CDC42 GTPase cycle"/>
</dbReference>
<dbReference type="SignaLink" id="Q6XZF7"/>
<dbReference type="SIGNOR" id="Q6XZF7"/>
<dbReference type="BioGRID-ORCS" id="23268">
    <property type="hits" value="15 hits in 1154 CRISPR screens"/>
</dbReference>
<dbReference type="ChiTaRS" id="DNMBP">
    <property type="organism name" value="human"/>
</dbReference>
<dbReference type="EvolutionaryTrace" id="Q6XZF7"/>
<dbReference type="GenomeRNAi" id="23268"/>
<dbReference type="Pharos" id="Q6XZF7">
    <property type="development level" value="Tbio"/>
</dbReference>
<dbReference type="PRO" id="PR:Q6XZF7"/>
<dbReference type="Proteomes" id="UP000005640">
    <property type="component" value="Chromosome 10"/>
</dbReference>
<dbReference type="RNAct" id="Q6XZF7">
    <property type="molecule type" value="protein"/>
</dbReference>
<dbReference type="Bgee" id="ENSG00000107554">
    <property type="expression patterns" value="Expressed in jejunal mucosa and 201 other cell types or tissues"/>
</dbReference>
<dbReference type="ExpressionAtlas" id="Q6XZF7">
    <property type="expression patterns" value="baseline and differential"/>
</dbReference>
<dbReference type="GO" id="GO:0005911">
    <property type="term" value="C:cell-cell junction"/>
    <property type="evidence" value="ECO:0000314"/>
    <property type="project" value="UniProtKB"/>
</dbReference>
<dbReference type="GO" id="GO:0005737">
    <property type="term" value="C:cytoplasm"/>
    <property type="evidence" value="ECO:0000318"/>
    <property type="project" value="GO_Central"/>
</dbReference>
<dbReference type="GO" id="GO:0005856">
    <property type="term" value="C:cytoskeleton"/>
    <property type="evidence" value="ECO:0007669"/>
    <property type="project" value="UniProtKB-SubCell"/>
</dbReference>
<dbReference type="GO" id="GO:0005829">
    <property type="term" value="C:cytosol"/>
    <property type="evidence" value="ECO:0000314"/>
    <property type="project" value="HPA"/>
</dbReference>
<dbReference type="GO" id="GO:0005794">
    <property type="term" value="C:Golgi apparatus"/>
    <property type="evidence" value="ECO:0000314"/>
    <property type="project" value="HPA"/>
</dbReference>
<dbReference type="GO" id="GO:0005795">
    <property type="term" value="C:Golgi stack"/>
    <property type="evidence" value="ECO:0007669"/>
    <property type="project" value="UniProtKB-SubCell"/>
</dbReference>
<dbReference type="GO" id="GO:0016604">
    <property type="term" value="C:nuclear body"/>
    <property type="evidence" value="ECO:0000314"/>
    <property type="project" value="HPA"/>
</dbReference>
<dbReference type="GO" id="GO:0005730">
    <property type="term" value="C:nucleolus"/>
    <property type="evidence" value="ECO:0000314"/>
    <property type="project" value="HPA"/>
</dbReference>
<dbReference type="GO" id="GO:0005654">
    <property type="term" value="C:nucleoplasm"/>
    <property type="evidence" value="ECO:0000314"/>
    <property type="project" value="HPA"/>
</dbReference>
<dbReference type="GO" id="GO:0098793">
    <property type="term" value="C:presynapse"/>
    <property type="evidence" value="ECO:0000250"/>
    <property type="project" value="UniProtKB"/>
</dbReference>
<dbReference type="GO" id="GO:0045202">
    <property type="term" value="C:synapse"/>
    <property type="evidence" value="ECO:0000250"/>
    <property type="project" value="UniProtKB"/>
</dbReference>
<dbReference type="GO" id="GO:0005085">
    <property type="term" value="F:guanyl-nucleotide exchange factor activity"/>
    <property type="evidence" value="ECO:0000314"/>
    <property type="project" value="UniProtKB"/>
</dbReference>
<dbReference type="GO" id="GO:0060271">
    <property type="term" value="P:cilium assembly"/>
    <property type="evidence" value="ECO:0000318"/>
    <property type="project" value="GO_Central"/>
</dbReference>
<dbReference type="GO" id="GO:0035556">
    <property type="term" value="P:intracellular signal transduction"/>
    <property type="evidence" value="ECO:0007669"/>
    <property type="project" value="InterPro"/>
</dbReference>
<dbReference type="GO" id="GO:0008360">
    <property type="term" value="P:regulation of cell shape"/>
    <property type="evidence" value="ECO:0000315"/>
    <property type="project" value="UniProtKB"/>
</dbReference>
<dbReference type="GO" id="GO:0051056">
    <property type="term" value="P:regulation of small GTPase mediated signal transduction"/>
    <property type="evidence" value="ECO:0000304"/>
    <property type="project" value="Reactome"/>
</dbReference>
<dbReference type="CDD" id="cd07589">
    <property type="entry name" value="BAR_DNMBP"/>
    <property type="match status" value="1"/>
</dbReference>
<dbReference type="CDD" id="cd00160">
    <property type="entry name" value="RhoGEF"/>
    <property type="match status" value="1"/>
</dbReference>
<dbReference type="CDD" id="cd11798">
    <property type="entry name" value="SH3_DNMBP_C1"/>
    <property type="match status" value="1"/>
</dbReference>
<dbReference type="CDD" id="cd12141">
    <property type="entry name" value="SH3_DNMBP_C2"/>
    <property type="match status" value="1"/>
</dbReference>
<dbReference type="CDD" id="cd11794">
    <property type="entry name" value="SH3_DNMBP_N1"/>
    <property type="match status" value="1"/>
</dbReference>
<dbReference type="CDD" id="cd11795">
    <property type="entry name" value="SH3_DNMBP_N2"/>
    <property type="match status" value="1"/>
</dbReference>
<dbReference type="CDD" id="cd11796">
    <property type="entry name" value="SH3_DNMBP_N3"/>
    <property type="match status" value="1"/>
</dbReference>
<dbReference type="CDD" id="cd11797">
    <property type="entry name" value="SH3_DNMBP_N4"/>
    <property type="match status" value="1"/>
</dbReference>
<dbReference type="FunFam" id="1.20.1270.60:FF:000027">
    <property type="entry name" value="dynamin-binding protein isoform X1"/>
    <property type="match status" value="1"/>
</dbReference>
<dbReference type="FunFam" id="2.30.30.40:FF:000066">
    <property type="entry name" value="dynamin-binding protein isoform X1"/>
    <property type="match status" value="1"/>
</dbReference>
<dbReference type="FunFam" id="2.30.30.40:FF:000084">
    <property type="entry name" value="dynamin-binding protein isoform X1"/>
    <property type="match status" value="1"/>
</dbReference>
<dbReference type="FunFam" id="2.30.30.40:FF:000120">
    <property type="entry name" value="dynamin-binding protein isoform X1"/>
    <property type="match status" value="1"/>
</dbReference>
<dbReference type="FunFam" id="2.30.30.40:FF:000138">
    <property type="entry name" value="dynamin-binding protein isoform X1"/>
    <property type="match status" value="1"/>
</dbReference>
<dbReference type="FunFam" id="2.30.30.40:FF:000160">
    <property type="entry name" value="dynamin-binding protein isoform X1"/>
    <property type="match status" value="1"/>
</dbReference>
<dbReference type="FunFam" id="2.30.30.40:FF:000165">
    <property type="entry name" value="dynamin-binding protein isoform X1"/>
    <property type="match status" value="1"/>
</dbReference>
<dbReference type="FunFam" id="1.20.900.10:FF:000023">
    <property type="entry name" value="dynamin-binding protein isoform X2"/>
    <property type="match status" value="1"/>
</dbReference>
<dbReference type="Gene3D" id="1.20.1270.60">
    <property type="entry name" value="Arfaptin homology (AH) domain/BAR domain"/>
    <property type="match status" value="1"/>
</dbReference>
<dbReference type="Gene3D" id="1.20.900.10">
    <property type="entry name" value="Dbl homology (DH) domain"/>
    <property type="match status" value="1"/>
</dbReference>
<dbReference type="Gene3D" id="2.30.30.40">
    <property type="entry name" value="SH3 Domains"/>
    <property type="match status" value="6"/>
</dbReference>
<dbReference type="InterPro" id="IPR027267">
    <property type="entry name" value="AH/BAR_dom_sf"/>
</dbReference>
<dbReference type="InterPro" id="IPR004148">
    <property type="entry name" value="BAR_dom"/>
</dbReference>
<dbReference type="InterPro" id="IPR035899">
    <property type="entry name" value="DBL_dom_sf"/>
</dbReference>
<dbReference type="InterPro" id="IPR000219">
    <property type="entry name" value="DH_dom"/>
</dbReference>
<dbReference type="InterPro" id="IPR035820">
    <property type="entry name" value="DNMBP_SH3_C1"/>
</dbReference>
<dbReference type="InterPro" id="IPR035817">
    <property type="entry name" value="DNMBP_SH3_N1"/>
</dbReference>
<dbReference type="InterPro" id="IPR035818">
    <property type="entry name" value="DNMBP_SH3_N2"/>
</dbReference>
<dbReference type="InterPro" id="IPR035819">
    <property type="entry name" value="DNMBP_SH3_N3"/>
</dbReference>
<dbReference type="InterPro" id="IPR051492">
    <property type="entry name" value="Dynamin-Rho_GEF"/>
</dbReference>
<dbReference type="InterPro" id="IPR001331">
    <property type="entry name" value="GDS_CDC24_CS"/>
</dbReference>
<dbReference type="InterPro" id="IPR036028">
    <property type="entry name" value="SH3-like_dom_sf"/>
</dbReference>
<dbReference type="InterPro" id="IPR001452">
    <property type="entry name" value="SH3_domain"/>
</dbReference>
<dbReference type="PANTHER" id="PTHR22834:SF19">
    <property type="entry name" value="DYNAMIN-BINDING PROTEIN"/>
    <property type="match status" value="1"/>
</dbReference>
<dbReference type="PANTHER" id="PTHR22834">
    <property type="entry name" value="NUCLEAR FUSION PROTEIN FUS2"/>
    <property type="match status" value="1"/>
</dbReference>
<dbReference type="Pfam" id="PF03114">
    <property type="entry name" value="BAR"/>
    <property type="match status" value="1"/>
</dbReference>
<dbReference type="Pfam" id="PF00621">
    <property type="entry name" value="RhoGEF"/>
    <property type="match status" value="1"/>
</dbReference>
<dbReference type="Pfam" id="PF00018">
    <property type="entry name" value="SH3_1"/>
    <property type="match status" value="2"/>
</dbReference>
<dbReference type="Pfam" id="PF07653">
    <property type="entry name" value="SH3_2"/>
    <property type="match status" value="2"/>
</dbReference>
<dbReference type="Pfam" id="PF14604">
    <property type="entry name" value="SH3_9"/>
    <property type="match status" value="1"/>
</dbReference>
<dbReference type="PRINTS" id="PR00499">
    <property type="entry name" value="P67PHOX"/>
</dbReference>
<dbReference type="SMART" id="SM00721">
    <property type="entry name" value="BAR"/>
    <property type="match status" value="1"/>
</dbReference>
<dbReference type="SMART" id="SM00325">
    <property type="entry name" value="RhoGEF"/>
    <property type="match status" value="1"/>
</dbReference>
<dbReference type="SMART" id="SM00326">
    <property type="entry name" value="SH3"/>
    <property type="match status" value="6"/>
</dbReference>
<dbReference type="SUPFAM" id="SSF103657">
    <property type="entry name" value="BAR/IMD domain-like"/>
    <property type="match status" value="1"/>
</dbReference>
<dbReference type="SUPFAM" id="SSF48065">
    <property type="entry name" value="DBL homology domain (DH-domain)"/>
    <property type="match status" value="1"/>
</dbReference>
<dbReference type="SUPFAM" id="SSF50044">
    <property type="entry name" value="SH3-domain"/>
    <property type="match status" value="6"/>
</dbReference>
<dbReference type="PROSITE" id="PS51021">
    <property type="entry name" value="BAR"/>
    <property type="match status" value="1"/>
</dbReference>
<dbReference type="PROSITE" id="PS00741">
    <property type="entry name" value="DH_1"/>
    <property type="match status" value="1"/>
</dbReference>
<dbReference type="PROSITE" id="PS50010">
    <property type="entry name" value="DH_2"/>
    <property type="match status" value="1"/>
</dbReference>
<dbReference type="PROSITE" id="PS50002">
    <property type="entry name" value="SH3"/>
    <property type="match status" value="6"/>
</dbReference>
<proteinExistence type="evidence at protein level"/>